<protein>
    <recommendedName>
        <fullName>Putative uncharacterized protein YOL035C</fullName>
    </recommendedName>
</protein>
<proteinExistence type="uncertain"/>
<keyword id="KW-0472">Membrane</keyword>
<keyword id="KW-0812">Transmembrane</keyword>
<keyword id="KW-1133">Transmembrane helix</keyword>
<gene>
    <name type="ordered locus">YOL035C</name>
    <name type="ORF">O2109</name>
</gene>
<reference key="1">
    <citation type="journal article" date="1997" name="Yeast">
        <title>Analysis of the DNA sequence of a 34,038 bp region on the left arm of yeast chromosome XV.</title>
        <authorList>
            <person name="Ramezani Rad M."/>
            <person name="Habbig B."/>
            <person name="Jansen G."/>
            <person name="Hattenhorst U."/>
            <person name="Kroll M."/>
            <person name="Hollenberg C.P."/>
        </authorList>
    </citation>
    <scope>NUCLEOTIDE SEQUENCE [GENOMIC DNA]</scope>
</reference>
<reference key="2">
    <citation type="journal article" date="1997" name="Nature">
        <title>The nucleotide sequence of Saccharomyces cerevisiae chromosome XV.</title>
        <authorList>
            <person name="Dujon B."/>
            <person name="Albermann K."/>
            <person name="Aldea M."/>
            <person name="Alexandraki D."/>
            <person name="Ansorge W."/>
            <person name="Arino J."/>
            <person name="Benes V."/>
            <person name="Bohn C."/>
            <person name="Bolotin-Fukuhara M."/>
            <person name="Bordonne R."/>
            <person name="Boyer J."/>
            <person name="Camasses A."/>
            <person name="Casamayor A."/>
            <person name="Casas C."/>
            <person name="Cheret G."/>
            <person name="Cziepluch C."/>
            <person name="Daignan-Fornier B."/>
            <person name="Dang V.-D."/>
            <person name="de Haan M."/>
            <person name="Delius H."/>
            <person name="Durand P."/>
            <person name="Fairhead C."/>
            <person name="Feldmann H."/>
            <person name="Gaillon L."/>
            <person name="Galisson F."/>
            <person name="Gamo F.-J."/>
            <person name="Gancedo C."/>
            <person name="Goffeau A."/>
            <person name="Goulding S.E."/>
            <person name="Grivell L.A."/>
            <person name="Habbig B."/>
            <person name="Hand N.J."/>
            <person name="Hani J."/>
            <person name="Hattenhorst U."/>
            <person name="Hebling U."/>
            <person name="Hernando Y."/>
            <person name="Herrero E."/>
            <person name="Heumann K."/>
            <person name="Hiesel R."/>
            <person name="Hilger F."/>
            <person name="Hofmann B."/>
            <person name="Hollenberg C.P."/>
            <person name="Hughes B."/>
            <person name="Jauniaux J.-C."/>
            <person name="Kalogeropoulos A."/>
            <person name="Katsoulou C."/>
            <person name="Kordes E."/>
            <person name="Lafuente M.J."/>
            <person name="Landt O."/>
            <person name="Louis E.J."/>
            <person name="Maarse A.C."/>
            <person name="Madania A."/>
            <person name="Mannhaupt G."/>
            <person name="Marck C."/>
            <person name="Martin R.P."/>
            <person name="Mewes H.-W."/>
            <person name="Michaux G."/>
            <person name="Paces V."/>
            <person name="Parle-McDermott A.G."/>
            <person name="Pearson B.M."/>
            <person name="Perrin A."/>
            <person name="Pettersson B."/>
            <person name="Poch O."/>
            <person name="Pohl T.M."/>
            <person name="Poirey R."/>
            <person name="Portetelle D."/>
            <person name="Pujol A."/>
            <person name="Purnelle B."/>
            <person name="Ramezani Rad M."/>
            <person name="Rechmann S."/>
            <person name="Schwager C."/>
            <person name="Schweizer M."/>
            <person name="Sor F."/>
            <person name="Sterky F."/>
            <person name="Tarassov I.A."/>
            <person name="Teodoru C."/>
            <person name="Tettelin H."/>
            <person name="Thierry A."/>
            <person name="Tobiasch E."/>
            <person name="Tzermia M."/>
            <person name="Uhlen M."/>
            <person name="Unseld M."/>
            <person name="Valens M."/>
            <person name="Vandenbol M."/>
            <person name="Vetter I."/>
            <person name="Vlcek C."/>
            <person name="Voet M."/>
            <person name="Volckaert G."/>
            <person name="Voss H."/>
            <person name="Wambutt R."/>
            <person name="Wedler H."/>
            <person name="Wiemann S."/>
            <person name="Winsor B."/>
            <person name="Wolfe K.H."/>
            <person name="Zollner A."/>
            <person name="Zumstein E."/>
            <person name="Kleine K."/>
        </authorList>
    </citation>
    <scope>NUCLEOTIDE SEQUENCE [LARGE SCALE GENOMIC DNA]</scope>
    <source>
        <strain>ATCC 204508 / S288c</strain>
    </source>
</reference>
<reference key="3">
    <citation type="journal article" date="2014" name="G3 (Bethesda)">
        <title>The reference genome sequence of Saccharomyces cerevisiae: Then and now.</title>
        <authorList>
            <person name="Engel S.R."/>
            <person name="Dietrich F.S."/>
            <person name="Fisk D.G."/>
            <person name="Binkley G."/>
            <person name="Balakrishnan R."/>
            <person name="Costanzo M.C."/>
            <person name="Dwight S.S."/>
            <person name="Hitz B.C."/>
            <person name="Karra K."/>
            <person name="Nash R.S."/>
            <person name="Weng S."/>
            <person name="Wong E.D."/>
            <person name="Lloyd P."/>
            <person name="Skrzypek M.S."/>
            <person name="Miyasato S.R."/>
            <person name="Simison M."/>
            <person name="Cherry J.M."/>
        </authorList>
    </citation>
    <scope>GENOME REANNOTATION</scope>
    <source>
        <strain>ATCC 204508 / S288c</strain>
    </source>
</reference>
<reference key="4">
    <citation type="journal article" date="2007" name="Genome Res.">
        <title>Approaching a complete repository of sequence-verified protein-encoding clones for Saccharomyces cerevisiae.</title>
        <authorList>
            <person name="Hu Y."/>
            <person name="Rolfs A."/>
            <person name="Bhullar B."/>
            <person name="Murthy T.V.S."/>
            <person name="Zhu C."/>
            <person name="Berger M.F."/>
            <person name="Camargo A.A."/>
            <person name="Kelley F."/>
            <person name="McCarron S."/>
            <person name="Jepson D."/>
            <person name="Richardson A."/>
            <person name="Raphael J."/>
            <person name="Moreira D."/>
            <person name="Taycher E."/>
            <person name="Zuo D."/>
            <person name="Mohr S."/>
            <person name="Kane M.F."/>
            <person name="Williamson J."/>
            <person name="Simpson A.J.G."/>
            <person name="Bulyk M.L."/>
            <person name="Harlow E."/>
            <person name="Marsischky G."/>
            <person name="Kolodner R.D."/>
            <person name="LaBaer J."/>
        </authorList>
    </citation>
    <scope>NUCLEOTIDE SEQUENCE [GENOMIC DNA]</scope>
    <source>
        <strain>ATCC 204508 / S288c</strain>
    </source>
</reference>
<evidence type="ECO:0000255" key="1"/>
<evidence type="ECO:0000305" key="2"/>
<evidence type="ECO:0000305" key="3">
    <source>
    </source>
</evidence>
<sequence>MRVYHHIYVYTYILSAVIYSQDLFPSWVVQLSTVKSDIIRPYLIHGNSFLFQILQVLITAPSTRCKFSFQNSIPFIFLALLLSQDFHVFLGIELHAFFVS</sequence>
<comment type="subcellular location">
    <subcellularLocation>
        <location evidence="2">Membrane</location>
        <topology evidence="2">Multi-pass membrane protein</topology>
    </subcellularLocation>
</comment>
<comment type="miscellaneous">
    <text evidence="2">Partially overlaps YOL036W.</text>
</comment>
<comment type="caution">
    <text evidence="3">Product of a dubious gene prediction unlikely to encode a functional protein. Because of that it is not part of the S.cerevisiae S288c complete/reference proteome set.</text>
</comment>
<feature type="chain" id="PRO_0000299688" description="Putative uncharacterized protein YOL035C">
    <location>
        <begin position="1"/>
        <end position="100"/>
    </location>
</feature>
<feature type="transmembrane region" description="Helical" evidence="1">
    <location>
        <begin position="9"/>
        <end position="29"/>
    </location>
</feature>
<feature type="transmembrane region" description="Helical" evidence="1">
    <location>
        <begin position="41"/>
        <end position="61"/>
    </location>
</feature>
<feature type="transmembrane region" description="Helical" evidence="1">
    <location>
        <begin position="72"/>
        <end position="92"/>
    </location>
</feature>
<accession>Q08207</accession>
<organism>
    <name type="scientific">Saccharomyces cerevisiae (strain ATCC 204508 / S288c)</name>
    <name type="common">Baker's yeast</name>
    <dbReference type="NCBI Taxonomy" id="559292"/>
    <lineage>
        <taxon>Eukaryota</taxon>
        <taxon>Fungi</taxon>
        <taxon>Dikarya</taxon>
        <taxon>Ascomycota</taxon>
        <taxon>Saccharomycotina</taxon>
        <taxon>Saccharomycetes</taxon>
        <taxon>Saccharomycetales</taxon>
        <taxon>Saccharomycetaceae</taxon>
        <taxon>Saccharomyces</taxon>
    </lineage>
</organism>
<name>YO035_YEAST</name>
<dbReference type="EMBL" id="Z74779">
    <property type="protein sequence ID" value="CAA99039.1"/>
    <property type="molecule type" value="Genomic_DNA"/>
</dbReference>
<dbReference type="EMBL" id="AY558427">
    <property type="protein sequence ID" value="AAS56753.1"/>
    <property type="molecule type" value="Genomic_DNA"/>
</dbReference>
<dbReference type="PIR" id="S66718">
    <property type="entry name" value="S66718"/>
</dbReference>
<dbReference type="DIP" id="DIP-4066N"/>
<dbReference type="PaxDb" id="4932-YOL035C"/>
<dbReference type="EnsemblFungi" id="YOL035C_mRNA">
    <property type="protein sequence ID" value="YOL035C"/>
    <property type="gene ID" value="YOL035C"/>
</dbReference>
<dbReference type="AGR" id="SGD:S000005395"/>
<dbReference type="SGD" id="S000005395">
    <property type="gene designation" value="YOL035C"/>
</dbReference>
<dbReference type="HOGENOM" id="CLU_2308251_0_0_1"/>
<dbReference type="GO" id="GO:0016020">
    <property type="term" value="C:membrane"/>
    <property type="evidence" value="ECO:0007669"/>
    <property type="project" value="UniProtKB-SubCell"/>
</dbReference>